<feature type="chain" id="PRO_0000313948" description="tRNA U34 carboxymethyltransferase">
    <location>
        <begin position="1"/>
        <end position="318"/>
    </location>
</feature>
<feature type="binding site" evidence="1">
    <location>
        <position position="88"/>
    </location>
    <ligand>
        <name>carboxy-S-adenosyl-L-methionine</name>
        <dbReference type="ChEBI" id="CHEBI:134278"/>
    </ligand>
</feature>
<feature type="binding site" evidence="1">
    <location>
        <position position="102"/>
    </location>
    <ligand>
        <name>carboxy-S-adenosyl-L-methionine</name>
        <dbReference type="ChEBI" id="CHEBI:134278"/>
    </ligand>
</feature>
<feature type="binding site" evidence="1">
    <location>
        <position position="107"/>
    </location>
    <ligand>
        <name>carboxy-S-adenosyl-L-methionine</name>
        <dbReference type="ChEBI" id="CHEBI:134278"/>
    </ligand>
</feature>
<feature type="binding site" evidence="1">
    <location>
        <position position="126"/>
    </location>
    <ligand>
        <name>carboxy-S-adenosyl-L-methionine</name>
        <dbReference type="ChEBI" id="CHEBI:134278"/>
    </ligand>
</feature>
<feature type="binding site" evidence="1">
    <location>
        <position position="192"/>
    </location>
    <ligand>
        <name>carboxy-S-adenosyl-L-methionine</name>
        <dbReference type="ChEBI" id="CHEBI:134278"/>
    </ligand>
</feature>
<feature type="binding site" evidence="1">
    <location>
        <position position="196"/>
    </location>
    <ligand>
        <name>carboxy-S-adenosyl-L-methionine</name>
        <dbReference type="ChEBI" id="CHEBI:134278"/>
    </ligand>
</feature>
<feature type="binding site" evidence="1">
    <location>
        <position position="311"/>
    </location>
    <ligand>
        <name>carboxy-S-adenosyl-L-methionine</name>
        <dbReference type="ChEBI" id="CHEBI:134278"/>
    </ligand>
</feature>
<keyword id="KW-0808">Transferase</keyword>
<keyword id="KW-0819">tRNA processing</keyword>
<organism>
    <name type="scientific">Pseudomonas fluorescens (strain Pf0-1)</name>
    <dbReference type="NCBI Taxonomy" id="205922"/>
    <lineage>
        <taxon>Bacteria</taxon>
        <taxon>Pseudomonadati</taxon>
        <taxon>Pseudomonadota</taxon>
        <taxon>Gammaproteobacteria</taxon>
        <taxon>Pseudomonadales</taxon>
        <taxon>Pseudomonadaceae</taxon>
        <taxon>Pseudomonas</taxon>
    </lineage>
</organism>
<reference key="1">
    <citation type="journal article" date="2009" name="Genome Biol.">
        <title>Genomic and genetic analyses of diversity and plant interactions of Pseudomonas fluorescens.</title>
        <authorList>
            <person name="Silby M.W."/>
            <person name="Cerdeno-Tarraga A.M."/>
            <person name="Vernikos G.S."/>
            <person name="Giddens S.R."/>
            <person name="Jackson R.W."/>
            <person name="Preston G.M."/>
            <person name="Zhang X.-X."/>
            <person name="Moon C.D."/>
            <person name="Gehrig S.M."/>
            <person name="Godfrey S.A.C."/>
            <person name="Knight C.G."/>
            <person name="Malone J.G."/>
            <person name="Robinson Z."/>
            <person name="Spiers A.J."/>
            <person name="Harris S."/>
            <person name="Challis G.L."/>
            <person name="Yaxley A.M."/>
            <person name="Harris D."/>
            <person name="Seeger K."/>
            <person name="Murphy L."/>
            <person name="Rutter S."/>
            <person name="Squares R."/>
            <person name="Quail M.A."/>
            <person name="Saunders E."/>
            <person name="Mavromatis K."/>
            <person name="Brettin T.S."/>
            <person name="Bentley S.D."/>
            <person name="Hothersall J."/>
            <person name="Stephens E."/>
            <person name="Thomas C.M."/>
            <person name="Parkhill J."/>
            <person name="Levy S.B."/>
            <person name="Rainey P.B."/>
            <person name="Thomson N.R."/>
        </authorList>
    </citation>
    <scope>NUCLEOTIDE SEQUENCE [LARGE SCALE GENOMIC DNA]</scope>
    <source>
        <strain>Pf0-1</strain>
    </source>
</reference>
<gene>
    <name evidence="1" type="primary">cmoB</name>
    <name type="ordered locus">Pfl01_4583</name>
</gene>
<proteinExistence type="inferred from homology"/>
<name>CMOB_PSEPF</name>
<evidence type="ECO:0000255" key="1">
    <source>
        <dbReference type="HAMAP-Rule" id="MF_01590"/>
    </source>
</evidence>
<dbReference type="EC" id="2.5.1.-" evidence="1"/>
<dbReference type="EMBL" id="CP000094">
    <property type="protein sequence ID" value="ABA76320.1"/>
    <property type="molecule type" value="Genomic_DNA"/>
</dbReference>
<dbReference type="RefSeq" id="WP_011335793.1">
    <property type="nucleotide sequence ID" value="NC_007492.2"/>
</dbReference>
<dbReference type="SMR" id="Q3K7D4"/>
<dbReference type="KEGG" id="pfo:Pfl01_4583"/>
<dbReference type="eggNOG" id="COG0500">
    <property type="taxonomic scope" value="Bacteria"/>
</dbReference>
<dbReference type="HOGENOM" id="CLU_052665_0_0_6"/>
<dbReference type="Proteomes" id="UP000002704">
    <property type="component" value="Chromosome"/>
</dbReference>
<dbReference type="GO" id="GO:0008168">
    <property type="term" value="F:methyltransferase activity"/>
    <property type="evidence" value="ECO:0007669"/>
    <property type="project" value="TreeGrafter"/>
</dbReference>
<dbReference type="GO" id="GO:0016765">
    <property type="term" value="F:transferase activity, transferring alkyl or aryl (other than methyl) groups"/>
    <property type="evidence" value="ECO:0007669"/>
    <property type="project" value="UniProtKB-UniRule"/>
</dbReference>
<dbReference type="GO" id="GO:0002098">
    <property type="term" value="P:tRNA wobble uridine modification"/>
    <property type="evidence" value="ECO:0007669"/>
    <property type="project" value="InterPro"/>
</dbReference>
<dbReference type="CDD" id="cd02440">
    <property type="entry name" value="AdoMet_MTases"/>
    <property type="match status" value="1"/>
</dbReference>
<dbReference type="Gene3D" id="3.40.50.150">
    <property type="entry name" value="Vaccinia Virus protein VP39"/>
    <property type="match status" value="1"/>
</dbReference>
<dbReference type="HAMAP" id="MF_01590">
    <property type="entry name" value="tRNA_carboxymethyltr_CmoB"/>
    <property type="match status" value="1"/>
</dbReference>
<dbReference type="InterPro" id="IPR010017">
    <property type="entry name" value="CmoB"/>
</dbReference>
<dbReference type="InterPro" id="IPR027555">
    <property type="entry name" value="Mo5U34_MeTrfas-like"/>
</dbReference>
<dbReference type="InterPro" id="IPR029063">
    <property type="entry name" value="SAM-dependent_MTases_sf"/>
</dbReference>
<dbReference type="NCBIfam" id="NF011650">
    <property type="entry name" value="PRK15068.1"/>
    <property type="match status" value="1"/>
</dbReference>
<dbReference type="NCBIfam" id="TIGR00452">
    <property type="entry name" value="tRNA 5-methoxyuridine(34)/uridine 5-oxyacetic acid(34) synthase CmoB"/>
    <property type="match status" value="1"/>
</dbReference>
<dbReference type="PANTHER" id="PTHR43464">
    <property type="entry name" value="METHYLTRANSFERASE"/>
    <property type="match status" value="1"/>
</dbReference>
<dbReference type="PANTHER" id="PTHR43464:SF95">
    <property type="entry name" value="TRNA U34 CARBOXYMETHYLTRANSFERASE"/>
    <property type="match status" value="1"/>
</dbReference>
<dbReference type="Pfam" id="PF08003">
    <property type="entry name" value="Methyltransf_9"/>
    <property type="match status" value="1"/>
</dbReference>
<dbReference type="SUPFAM" id="SSF53335">
    <property type="entry name" value="S-adenosyl-L-methionine-dependent methyltransferases"/>
    <property type="match status" value="1"/>
</dbReference>
<protein>
    <recommendedName>
        <fullName evidence="1">tRNA U34 carboxymethyltransferase</fullName>
        <ecNumber evidence="1">2.5.1.-</ecNumber>
    </recommendedName>
</protein>
<comment type="function">
    <text evidence="1">Catalyzes carboxymethyl transfer from carboxy-S-adenosyl-L-methionine (Cx-SAM) to 5-hydroxyuridine (ho5U) to form 5-carboxymethoxyuridine (cmo5U) at position 34 in tRNAs.</text>
</comment>
<comment type="catalytic activity">
    <reaction evidence="1">
        <text>carboxy-S-adenosyl-L-methionine + 5-hydroxyuridine(34) in tRNA = 5-carboxymethoxyuridine(34) in tRNA + S-adenosyl-L-homocysteine + H(+)</text>
        <dbReference type="Rhea" id="RHEA:52848"/>
        <dbReference type="Rhea" id="RHEA-COMP:13381"/>
        <dbReference type="Rhea" id="RHEA-COMP:13383"/>
        <dbReference type="ChEBI" id="CHEBI:15378"/>
        <dbReference type="ChEBI" id="CHEBI:57856"/>
        <dbReference type="ChEBI" id="CHEBI:134278"/>
        <dbReference type="ChEBI" id="CHEBI:136877"/>
        <dbReference type="ChEBI" id="CHEBI:136879"/>
    </reaction>
</comment>
<comment type="subunit">
    <text evidence="1">Homotetramer.</text>
</comment>
<comment type="similarity">
    <text evidence="1">Belongs to the class I-like SAM-binding methyltransferase superfamily. CmoB family.</text>
</comment>
<sequence length="318" mass="36325">MIDLSPLARRLAGTPLAEWANTLQVQLDKKMEKGHGDLERWQSALDALPKIQPTEVDLLDGLKLDTNCDDETRAQMRTALMGLSPWRKGPFDLFGVHVDTEWRSDWKWSRVSPHLDLKGKRILDVGCGNGYYMWRMLGAGADSVIGVDPNWLFFCQFQAVQRYLSEPNAWHLPFPFEDLPPNLEGFDTVFSMGVFYHRRSPIEHLLALKDCLVKGGELVLETLVVEGDKHQVLVPEDRYAQMRNVWFLPSVPALELWLRRAGFTDVRCVDVSMTTVDEQRGTEWMKYQSLSDFLDPDDHSKTIEGLPAPMRAVIVAKK</sequence>
<accession>Q3K7D4</accession>